<reference key="1">
    <citation type="submission" date="2001-05" db="EMBL/GenBank/DDBJ databases">
        <title>Molecular cloning of rhesus monkey NKp46 and NKp30 and identification of NKp46SD and NKp30S.</title>
        <authorList>
            <person name="LaBonte M.L."/>
            <person name="Miller J."/>
            <person name="Letvin N.L."/>
        </authorList>
    </citation>
    <scope>NUCLEOTIDE SEQUENCE (ISOFORMS 1; 2; 3 AND 4)</scope>
    <scope>VARIANT VAL-156</scope>
</reference>
<reference key="2">
    <citation type="submission" date="2003-03" db="EMBL/GenBank/DDBJ databases">
        <title>NCR express by macaca NK cells.</title>
        <authorList>
            <person name="Rizzi M."/>
            <person name="Biassoni R."/>
        </authorList>
    </citation>
    <scope>NUCLEOTIDE SEQUENCE (ISOFORMS 1 AND 4)</scope>
    <scope>VARIANT VAL-156</scope>
    <source>
        <tissue>Lymphoid tissue</tissue>
    </source>
</reference>
<reference key="3">
    <citation type="journal article" date="2004" name="Mol. Biol. Evol.">
        <title>Rhesus macaque class I duplicon structures, organization, and evolution within the alpha block of the major histocompatibility complex.</title>
        <authorList>
            <person name="Kulski J.K."/>
            <person name="Anzai T."/>
            <person name="Shiina T."/>
            <person name="Inoko H."/>
        </authorList>
    </citation>
    <scope>NUCLEOTIDE SEQUENCE [LARGE SCALE GENOMIC DNA] (ISOFORM 5)</scope>
</reference>
<evidence type="ECO:0000250" key="1">
    <source>
        <dbReference type="UniProtKB" id="O14931"/>
    </source>
</evidence>
<evidence type="ECO:0000255" key="2"/>
<evidence type="ECO:0000255" key="3">
    <source>
        <dbReference type="PROSITE-ProRule" id="PRU00114"/>
    </source>
</evidence>
<evidence type="ECO:0000269" key="4">
    <source ref="1"/>
</evidence>
<evidence type="ECO:0000269" key="5">
    <source ref="2"/>
</evidence>
<evidence type="ECO:0000305" key="6"/>
<feature type="signal peptide" evidence="2">
    <location>
        <begin position="1"/>
        <end position="18"/>
    </location>
</feature>
<feature type="chain" id="PRO_0000015034" description="Natural cytotoxicity triggering receptor 3">
    <location>
        <begin position="19"/>
        <end position="201"/>
    </location>
</feature>
<feature type="topological domain" description="Extracellular" evidence="2">
    <location>
        <begin position="19"/>
        <end position="133"/>
    </location>
</feature>
<feature type="transmembrane region" description="Helical" evidence="2">
    <location>
        <begin position="134"/>
        <end position="154"/>
    </location>
</feature>
<feature type="topological domain" description="Cytoplasmic" evidence="2">
    <location>
        <begin position="155"/>
        <end position="201"/>
    </location>
</feature>
<feature type="domain" description="Ig-like">
    <location>
        <begin position="19"/>
        <end position="126"/>
    </location>
</feature>
<feature type="glycosylation site" description="N-linked (GlcNAc...) asparagine" evidence="2">
    <location>
        <position position="42"/>
    </location>
</feature>
<feature type="glycosylation site" description="N-linked (GlcNAc...) asparagine" evidence="2">
    <location>
        <position position="121"/>
    </location>
</feature>
<feature type="disulfide bond" evidence="3">
    <location>
        <begin position="39"/>
        <end position="108"/>
    </location>
</feature>
<feature type="splice variant" id="VSP_010414" description="In isoform 2." evidence="6">
    <location>
        <begin position="66"/>
        <end position="90"/>
    </location>
</feature>
<feature type="splice variant" id="VSP_010415" description="In isoform 3." evidence="6">
    <original>VLGL</original>
    <variation>NILS</variation>
    <location>
        <begin position="112"/>
        <end position="115"/>
    </location>
</feature>
<feature type="splice variant" id="VSP_010416" description="In isoform 3." evidence="6">
    <location>
        <begin position="116"/>
        <end position="201"/>
    </location>
</feature>
<feature type="splice variant" id="VSP_013641" description="In isoform 1." evidence="6">
    <original>LTWKGPRRQLPAVV</original>
    <variation>HCHMGTHCHSSDGP</variation>
    <location>
        <begin position="167"/>
        <end position="180"/>
    </location>
</feature>
<feature type="splice variant" id="VSP_010417" description="In isoform 4." evidence="6">
    <location>
        <begin position="177"/>
        <end position="201"/>
    </location>
</feature>
<feature type="splice variant" id="VSP_013642" description="In isoform 1." evidence="6">
    <location>
        <begin position="181"/>
        <end position="201"/>
    </location>
</feature>
<feature type="sequence variant" evidence="4 5">
    <original>M</original>
    <variation>V</variation>
    <location>
        <position position="156"/>
    </location>
</feature>
<keyword id="KW-0025">Alternative splicing</keyword>
<keyword id="KW-1003">Cell membrane</keyword>
<keyword id="KW-1015">Disulfide bond</keyword>
<keyword id="KW-0325">Glycoprotein</keyword>
<keyword id="KW-0391">Immunity</keyword>
<keyword id="KW-0393">Immunoglobulin domain</keyword>
<keyword id="KW-0472">Membrane</keyword>
<keyword id="KW-0675">Receptor</keyword>
<keyword id="KW-1185">Reference proteome</keyword>
<keyword id="KW-0732">Signal</keyword>
<keyword id="KW-0812">Transmembrane</keyword>
<keyword id="KW-1133">Transmembrane helix</keyword>
<sequence length="201" mass="21684">MAWMLLLILIMVYPGSCALWVSQPPEIRTLEGSSAFLPCSFNASQGRLAIGSVTWFRDEVAPGKEVRNGTPEFRGRLAPLSSSRFLRDHQAELHIWDVRGHDAGIYVCRVEVLGLGVGTGNGTRLVVEKEYPQLGAGTVLLLRAGFYAVSFLSVAMGSTLYYQGKCLTWKGPRRQLPAVVPGPLPPPCGSSAHLLPPVPGG</sequence>
<protein>
    <recommendedName>
        <fullName>Natural cytotoxicity triggering receptor 3</fullName>
    </recommendedName>
    <alternativeName>
        <fullName>Natural killer cell p30-related protein</fullName>
        <shortName>NK-p30</shortName>
        <shortName>NKp30</shortName>
    </alternativeName>
    <cdAntigenName>CD337</cdAntigenName>
</protein>
<comment type="function">
    <text evidence="1">Cell membrane receptor of natural killer/NK cells that is activated by binding of extracellular ligands including BAG6 and NCR3LG1. Stimulates NK cells cytotoxicity toward neighboring cells producing these ligands. It controls, for instance, NK cells cytotoxicity against tumor cells. Engagement of NCR3 by BAG6 also promotes myeloid dendritic cells (DC) maturation, both through killing DCs that did not acquire a mature phenotype, and inducing the release by NK cells of TNFA and IFNG that promote DC maturation.</text>
</comment>
<comment type="subunit">
    <text evidence="1">Homodimer in the unliganted form. Interacts with CD3Z. Interacts with and is activated by binding to NCR3LG1. Interacts with and is activated by binding to BAG6. Interacts with and is inhibited by binding to LGALS3.</text>
</comment>
<comment type="subcellular location">
    <subcellularLocation>
        <location evidence="1">Cell membrane</location>
        <topology evidence="2">Single-pass type I membrane protein</topology>
    </subcellularLocation>
</comment>
<comment type="alternative products">
    <event type="alternative splicing"/>
    <isoform>
        <id>Q8MJ02-5</id>
        <name>5</name>
        <sequence type="displayed"/>
    </isoform>
    <isoform>
        <id>Q8MJ02-1</id>
        <name>1</name>
        <sequence type="described" ref="VSP_013641 VSP_013642"/>
    </isoform>
    <isoform>
        <id>Q8MJ02-2</id>
        <name>2</name>
        <sequence type="described" ref="VSP_010414"/>
    </isoform>
    <isoform>
        <id>Q8MJ02-3</id>
        <name>3</name>
        <sequence type="described" ref="VSP_010415 VSP_010416"/>
    </isoform>
    <isoform>
        <id>Q8MJ02-4</id>
        <name>4</name>
        <sequence type="described" ref="VSP_010417"/>
    </isoform>
</comment>
<comment type="similarity">
    <text evidence="6">Belongs to the natural cytotoxicity receptor (NCR) family.</text>
</comment>
<dbReference type="EMBL" id="AY035214">
    <property type="protein sequence ID" value="AAK63116.1"/>
    <property type="molecule type" value="mRNA"/>
</dbReference>
<dbReference type="EMBL" id="AY035215">
    <property type="protein sequence ID" value="AAK63117.1"/>
    <property type="molecule type" value="mRNA"/>
</dbReference>
<dbReference type="EMBL" id="AY035216">
    <property type="protein sequence ID" value="AAK63118.1"/>
    <property type="molecule type" value="mRNA"/>
</dbReference>
<dbReference type="EMBL" id="AY035217">
    <property type="protein sequence ID" value="AAK63119.1"/>
    <property type="molecule type" value="mRNA"/>
</dbReference>
<dbReference type="EMBL" id="AJ554301">
    <property type="protein sequence ID" value="CAD86942.1"/>
    <property type="molecule type" value="mRNA"/>
</dbReference>
<dbReference type="EMBL" id="AB128049">
    <property type="protein sequence ID" value="BAD69721.1"/>
    <property type="molecule type" value="Genomic_DNA"/>
</dbReference>
<dbReference type="RefSeq" id="NP_001036105.1">
    <molecule id="Q8MJ02-1"/>
    <property type="nucleotide sequence ID" value="NM_001042640.1"/>
</dbReference>
<dbReference type="RefSeq" id="XP_014991417.1">
    <property type="nucleotide sequence ID" value="XM_015135931.1"/>
</dbReference>
<dbReference type="RefSeq" id="XP_028702670.1">
    <molecule id="Q8MJ02-5"/>
    <property type="nucleotide sequence ID" value="XM_028846837.1"/>
</dbReference>
<dbReference type="SMR" id="Q8MJ02"/>
<dbReference type="FunCoup" id="Q8MJ02">
    <property type="interactions" value="632"/>
</dbReference>
<dbReference type="STRING" id="9544.ENSMMUP00000011617"/>
<dbReference type="GlyCosmos" id="Q8MJ02">
    <property type="glycosylation" value="2 sites, No reported glycans"/>
</dbReference>
<dbReference type="PaxDb" id="9544-ENSMMUP00000011616"/>
<dbReference type="Ensembl" id="ENSMMUT00000012386.3">
    <molecule id="Q8MJ02-5"/>
    <property type="protein sequence ID" value="ENSMMUP00000011616.3"/>
    <property type="gene ID" value="ENSMMUG00000008854.4"/>
</dbReference>
<dbReference type="Ensembl" id="ENSMMUT00000092524.1">
    <molecule id="Q8MJ02-2"/>
    <property type="protein sequence ID" value="ENSMMUP00000079012.1"/>
    <property type="gene ID" value="ENSMMUG00000008854.4"/>
</dbReference>
<dbReference type="GeneID" id="715574"/>
<dbReference type="KEGG" id="mcc:715574"/>
<dbReference type="CTD" id="259197"/>
<dbReference type="VEuPathDB" id="HostDB:ENSMMUG00000008854"/>
<dbReference type="eggNOG" id="ENOG502SGFD">
    <property type="taxonomic scope" value="Eukaryota"/>
</dbReference>
<dbReference type="GeneTree" id="ENSGT00390000006603"/>
<dbReference type="HOGENOM" id="CLU_132406_0_0_1"/>
<dbReference type="InParanoid" id="Q8MJ02"/>
<dbReference type="OrthoDB" id="9950892at2759"/>
<dbReference type="Proteomes" id="UP000006718">
    <property type="component" value="Chromosome 4"/>
</dbReference>
<dbReference type="Bgee" id="ENSMMUG00000008854">
    <property type="expression patterns" value="Expressed in spleen and 10 other cell types or tissues"/>
</dbReference>
<dbReference type="ExpressionAtlas" id="Q8MJ02">
    <property type="expression patterns" value="baseline"/>
</dbReference>
<dbReference type="GO" id="GO:0005886">
    <property type="term" value="C:plasma membrane"/>
    <property type="evidence" value="ECO:0007669"/>
    <property type="project" value="UniProtKB-SubCell"/>
</dbReference>
<dbReference type="GO" id="GO:0002429">
    <property type="term" value="P:immune response-activating cell surface receptor signaling pathway"/>
    <property type="evidence" value="ECO:0000250"/>
    <property type="project" value="UniProtKB"/>
</dbReference>
<dbReference type="GO" id="GO:0030101">
    <property type="term" value="P:natural killer cell activation"/>
    <property type="evidence" value="ECO:0000250"/>
    <property type="project" value="UniProtKB"/>
</dbReference>
<dbReference type="GO" id="GO:0045954">
    <property type="term" value="P:positive regulation of natural killer cell mediated cytotoxicity"/>
    <property type="evidence" value="ECO:0000318"/>
    <property type="project" value="GO_Central"/>
</dbReference>
<dbReference type="CDD" id="cd20926">
    <property type="entry name" value="IgV_NKp30"/>
    <property type="match status" value="1"/>
</dbReference>
<dbReference type="FunFam" id="2.60.40.10:FF:000860">
    <property type="entry name" value="natural cytotoxicity triggering receptor 3"/>
    <property type="match status" value="1"/>
</dbReference>
<dbReference type="Gene3D" id="2.60.40.10">
    <property type="entry name" value="Immunoglobulins"/>
    <property type="match status" value="1"/>
</dbReference>
<dbReference type="InterPro" id="IPR007110">
    <property type="entry name" value="Ig-like_dom"/>
</dbReference>
<dbReference type="InterPro" id="IPR036179">
    <property type="entry name" value="Ig-like_dom_sf"/>
</dbReference>
<dbReference type="InterPro" id="IPR013783">
    <property type="entry name" value="Ig-like_fold"/>
</dbReference>
<dbReference type="InterPro" id="IPR003599">
    <property type="entry name" value="Ig_sub"/>
</dbReference>
<dbReference type="InterPro" id="IPR013106">
    <property type="entry name" value="Ig_V-set"/>
</dbReference>
<dbReference type="InterPro" id="IPR043226">
    <property type="entry name" value="NCR3"/>
</dbReference>
<dbReference type="PANTHER" id="PTHR47904">
    <property type="entry name" value="NATURAL CYTOTOXICITY TRIGGERING RECEPTOR 3"/>
    <property type="match status" value="1"/>
</dbReference>
<dbReference type="PANTHER" id="PTHR47904:SF1">
    <property type="entry name" value="NATURAL CYTOTOXICITY TRIGGERING RECEPTOR 3"/>
    <property type="match status" value="1"/>
</dbReference>
<dbReference type="Pfam" id="PF07686">
    <property type="entry name" value="V-set"/>
    <property type="match status" value="1"/>
</dbReference>
<dbReference type="SMART" id="SM00409">
    <property type="entry name" value="IG"/>
    <property type="match status" value="1"/>
</dbReference>
<dbReference type="SUPFAM" id="SSF48726">
    <property type="entry name" value="Immunoglobulin"/>
    <property type="match status" value="1"/>
</dbReference>
<dbReference type="PROSITE" id="PS50835">
    <property type="entry name" value="IG_LIKE"/>
    <property type="match status" value="1"/>
</dbReference>
<name>NCTR3_MACMU</name>
<proteinExistence type="evidence at transcript level"/>
<accession>Q8MJ02</accession>
<accession>Q5TM24</accession>
<accession>Q8MJ00</accession>
<accession>Q8MJ01</accession>
<accession>Q95JB8</accession>
<gene>
    <name type="primary">NCR3</name>
</gene>
<organism>
    <name type="scientific">Macaca mulatta</name>
    <name type="common">Rhesus macaque</name>
    <dbReference type="NCBI Taxonomy" id="9544"/>
    <lineage>
        <taxon>Eukaryota</taxon>
        <taxon>Metazoa</taxon>
        <taxon>Chordata</taxon>
        <taxon>Craniata</taxon>
        <taxon>Vertebrata</taxon>
        <taxon>Euteleostomi</taxon>
        <taxon>Mammalia</taxon>
        <taxon>Eutheria</taxon>
        <taxon>Euarchontoglires</taxon>
        <taxon>Primates</taxon>
        <taxon>Haplorrhini</taxon>
        <taxon>Catarrhini</taxon>
        <taxon>Cercopithecidae</taxon>
        <taxon>Cercopithecinae</taxon>
        <taxon>Macaca</taxon>
    </lineage>
</organism>